<sequence length="320" mass="35157">MQTRNTFSSIKEEITRSISVSLMIYIITWAPVSNAYPIFAQQGYENPREATGRIVCANCHLANKPVDIEVPQAVLPDTVFEAVVRIPYDMQLKQVLANGKKGGLNVGAVLILPEGFELAPPDRISPEIKEKMGNLSFQSYRPTKKNILVIGPVPGQKYSEITFPILSPDPATKKDVHFLKYPIYVGGNRGRGQIYPDGSKSNNNVYNATAAGIVSKIIRKEKGGYEITIVDAANGRQVVDIIPPGPELLVSEGESIKLDQPLTSNPNVGGFGQGDAEIVLQDPLRVQGLLFFFASVILAQIFLVLKKKQFEKVQLSEMNF</sequence>
<dbReference type="EMBL" id="DQ119058">
    <property type="protein sequence ID" value="AAZ94664.1"/>
    <property type="molecule type" value="Genomic_DNA"/>
</dbReference>
<dbReference type="EMBL" id="AJ970307">
    <property type="protein sequence ID" value="CAJ00771.1"/>
    <property type="molecule type" value="Genomic_DNA"/>
</dbReference>
<dbReference type="EMBL" id="DQ865975">
    <property type="protein sequence ID" value="ABI97430.1"/>
    <property type="molecule type" value="Genomic_DNA"/>
</dbReference>
<dbReference type="EMBL" id="DQ865976">
    <property type="protein sequence ID" value="ABI98758.1"/>
    <property type="molecule type" value="Genomic_DNA"/>
</dbReference>
<dbReference type="RefSeq" id="YP_247612.1">
    <property type="nucleotide sequence ID" value="NC_007144.1"/>
</dbReference>
<dbReference type="SMR" id="Q2QD76"/>
<dbReference type="GeneID" id="3429265"/>
<dbReference type="KEGG" id="csv:3429265"/>
<dbReference type="OrthoDB" id="415867at2759"/>
<dbReference type="GO" id="GO:0009535">
    <property type="term" value="C:chloroplast thylakoid membrane"/>
    <property type="evidence" value="ECO:0007669"/>
    <property type="project" value="UniProtKB-SubCell"/>
</dbReference>
<dbReference type="GO" id="GO:0009055">
    <property type="term" value="F:electron transfer activity"/>
    <property type="evidence" value="ECO:0007669"/>
    <property type="project" value="UniProtKB-UniRule"/>
</dbReference>
<dbReference type="GO" id="GO:0020037">
    <property type="term" value="F:heme binding"/>
    <property type="evidence" value="ECO:0007669"/>
    <property type="project" value="InterPro"/>
</dbReference>
<dbReference type="GO" id="GO:0005506">
    <property type="term" value="F:iron ion binding"/>
    <property type="evidence" value="ECO:0007669"/>
    <property type="project" value="InterPro"/>
</dbReference>
<dbReference type="GO" id="GO:0015979">
    <property type="term" value="P:photosynthesis"/>
    <property type="evidence" value="ECO:0007669"/>
    <property type="project" value="UniProtKB-UniRule"/>
</dbReference>
<dbReference type="FunFam" id="1.20.5.700:FF:000001">
    <property type="entry name" value="Cytochrome f"/>
    <property type="match status" value="1"/>
</dbReference>
<dbReference type="FunFam" id="2.40.50.100:FF:000007">
    <property type="entry name" value="Cytochrome f"/>
    <property type="match status" value="1"/>
</dbReference>
<dbReference type="FunFam" id="2.60.40.830:FF:000001">
    <property type="entry name" value="Cytochrome f"/>
    <property type="match status" value="1"/>
</dbReference>
<dbReference type="Gene3D" id="2.40.50.100">
    <property type="match status" value="1"/>
</dbReference>
<dbReference type="Gene3D" id="2.60.40.830">
    <property type="entry name" value="Cytochrome f large domain"/>
    <property type="match status" value="1"/>
</dbReference>
<dbReference type="Gene3D" id="1.20.5.700">
    <property type="entry name" value="Single helix bin"/>
    <property type="match status" value="1"/>
</dbReference>
<dbReference type="HAMAP" id="MF_00610">
    <property type="entry name" value="Cytb6_f_cytF"/>
    <property type="match status" value="1"/>
</dbReference>
<dbReference type="InterPro" id="IPR024058">
    <property type="entry name" value="Cyt-f_TM"/>
</dbReference>
<dbReference type="InterPro" id="IPR002325">
    <property type="entry name" value="Cyt_f"/>
</dbReference>
<dbReference type="InterPro" id="IPR024094">
    <property type="entry name" value="Cyt_f_lg_dom"/>
</dbReference>
<dbReference type="InterPro" id="IPR036826">
    <property type="entry name" value="Cyt_f_lg_dom_sf"/>
</dbReference>
<dbReference type="InterPro" id="IPR011054">
    <property type="entry name" value="Rudment_hybrid_motif"/>
</dbReference>
<dbReference type="PANTHER" id="PTHR33288">
    <property type="match status" value="1"/>
</dbReference>
<dbReference type="PANTHER" id="PTHR33288:SF10">
    <property type="entry name" value="CYTOCHROME F"/>
    <property type="match status" value="1"/>
</dbReference>
<dbReference type="Pfam" id="PF01333">
    <property type="entry name" value="Apocytochr_F_C"/>
    <property type="match status" value="1"/>
</dbReference>
<dbReference type="Pfam" id="PF16639">
    <property type="entry name" value="Apocytochr_F_N"/>
    <property type="match status" value="1"/>
</dbReference>
<dbReference type="PRINTS" id="PR00610">
    <property type="entry name" value="CYTOCHROMEF"/>
</dbReference>
<dbReference type="SUPFAM" id="SSF103431">
    <property type="entry name" value="Cytochrome f subunit of the cytochrome b6f complex, transmembrane anchor"/>
    <property type="match status" value="1"/>
</dbReference>
<dbReference type="SUPFAM" id="SSF49441">
    <property type="entry name" value="Cytochrome f, large domain"/>
    <property type="match status" value="1"/>
</dbReference>
<dbReference type="SUPFAM" id="SSF51246">
    <property type="entry name" value="Rudiment single hybrid motif"/>
    <property type="match status" value="1"/>
</dbReference>
<dbReference type="PROSITE" id="PS51010">
    <property type="entry name" value="CYTF"/>
    <property type="match status" value="1"/>
</dbReference>
<accession>Q2QD76</accession>
<accession>A5J1U7</accession>
<accession>Q4VZH9</accession>
<protein>
    <recommendedName>
        <fullName evidence="2">Cytochrome f</fullName>
    </recommendedName>
</protein>
<name>CYF_CUCSA</name>
<organism>
    <name type="scientific">Cucumis sativus</name>
    <name type="common">Cucumber</name>
    <dbReference type="NCBI Taxonomy" id="3659"/>
    <lineage>
        <taxon>Eukaryota</taxon>
        <taxon>Viridiplantae</taxon>
        <taxon>Streptophyta</taxon>
        <taxon>Embryophyta</taxon>
        <taxon>Tracheophyta</taxon>
        <taxon>Spermatophyta</taxon>
        <taxon>Magnoliopsida</taxon>
        <taxon>eudicotyledons</taxon>
        <taxon>Gunneridae</taxon>
        <taxon>Pentapetalae</taxon>
        <taxon>rosids</taxon>
        <taxon>fabids</taxon>
        <taxon>Cucurbitales</taxon>
        <taxon>Cucurbitaceae</taxon>
        <taxon>Benincaseae</taxon>
        <taxon>Cucumis</taxon>
    </lineage>
</organism>
<keyword id="KW-0150">Chloroplast</keyword>
<keyword id="KW-0249">Electron transport</keyword>
<keyword id="KW-0349">Heme</keyword>
<keyword id="KW-0408">Iron</keyword>
<keyword id="KW-0472">Membrane</keyword>
<keyword id="KW-0479">Metal-binding</keyword>
<keyword id="KW-0602">Photosynthesis</keyword>
<keyword id="KW-0934">Plastid</keyword>
<keyword id="KW-0732">Signal</keyword>
<keyword id="KW-0793">Thylakoid</keyword>
<keyword id="KW-0812">Transmembrane</keyword>
<keyword id="KW-1133">Transmembrane helix</keyword>
<keyword id="KW-0813">Transport</keyword>
<proteinExistence type="inferred from homology"/>
<feature type="signal peptide" evidence="2">
    <location>
        <begin position="1"/>
        <end position="35"/>
    </location>
</feature>
<feature type="chain" id="PRO_0000275407" description="Cytochrome f">
    <location>
        <begin position="36"/>
        <end position="320"/>
    </location>
</feature>
<feature type="transmembrane region" description="Helical" evidence="2">
    <location>
        <begin position="286"/>
        <end position="306"/>
    </location>
</feature>
<feature type="binding site" description="axial binding residue" evidence="2">
    <location>
        <position position="36"/>
    </location>
    <ligand>
        <name>heme</name>
        <dbReference type="ChEBI" id="CHEBI:30413"/>
    </ligand>
    <ligandPart>
        <name>Fe</name>
        <dbReference type="ChEBI" id="CHEBI:18248"/>
    </ligandPart>
</feature>
<feature type="binding site" description="covalent" evidence="2">
    <location>
        <position position="56"/>
    </location>
    <ligand>
        <name>heme</name>
        <dbReference type="ChEBI" id="CHEBI:30413"/>
    </ligand>
</feature>
<feature type="binding site" description="covalent" evidence="2">
    <location>
        <position position="59"/>
    </location>
    <ligand>
        <name>heme</name>
        <dbReference type="ChEBI" id="CHEBI:30413"/>
    </ligand>
</feature>
<feature type="binding site" description="axial binding residue" evidence="2">
    <location>
        <position position="60"/>
    </location>
    <ligand>
        <name>heme</name>
        <dbReference type="ChEBI" id="CHEBI:30413"/>
    </ligand>
    <ligandPart>
        <name>Fe</name>
        <dbReference type="ChEBI" id="CHEBI:18248"/>
    </ligandPart>
</feature>
<feature type="sequence conflict" description="In Ref. 2; CAJ00771." evidence="3" ref="2">
    <original>V</original>
    <variation>G</variation>
    <location>
        <position position="70"/>
    </location>
</feature>
<feature type="sequence conflict" description="In Ref. 2; CAJ00771." evidence="3" ref="2">
    <original>VV</original>
    <variation>GG</variation>
    <location>
        <begin position="83"/>
        <end position="84"/>
    </location>
</feature>
<feature type="sequence conflict" description="In Ref. 2; CAJ00771." evidence="3" ref="2">
    <original>G</original>
    <variation>W</variation>
    <location>
        <position position="103"/>
    </location>
</feature>
<feature type="sequence conflict" description="In Ref. 2; CAJ00771." evidence="3" ref="2">
    <original>V</original>
    <variation>G</variation>
    <location>
        <position position="109"/>
    </location>
</feature>
<feature type="sequence conflict" description="In Ref. 2; CAJ00771." evidence="3" ref="2">
    <original>MGNLSFQS</original>
    <variation>KGQSVLFRA</variation>
    <location>
        <begin position="132"/>
        <end position="139"/>
    </location>
</feature>
<feature type="sequence conflict" description="In Ref. 2; CAJ00771." evidence="3" ref="2">
    <original>I</original>
    <variation>F</variation>
    <location>
        <position position="256"/>
    </location>
</feature>
<feature type="sequence conflict" description="In Ref. 2; CAJ00771." evidence="3" ref="2">
    <original>Q</original>
    <variation>H</variation>
    <location>
        <position position="260"/>
    </location>
</feature>
<feature type="sequence conflict" description="In Ref. 2; CAJ00771." evidence="3" ref="2">
    <original>QLSE</original>
    <variation>NCPK</variation>
    <location>
        <begin position="314"/>
        <end position="317"/>
    </location>
</feature>
<evidence type="ECO:0000250" key="1"/>
<evidence type="ECO:0000255" key="2">
    <source>
        <dbReference type="HAMAP-Rule" id="MF_00610"/>
    </source>
</evidence>
<evidence type="ECO:0000305" key="3"/>
<geneLocation type="chloroplast"/>
<gene>
    <name evidence="2" type="primary">petA</name>
    <name type="ordered locus">CsCp053</name>
</gene>
<comment type="function">
    <text evidence="2">Component of the cytochrome b6-f complex, which mediates electron transfer between photosystem II (PSII) and photosystem I (PSI), cyclic electron flow around PSI, and state transitions.</text>
</comment>
<comment type="cofactor">
    <cofactor evidence="2">
        <name>heme</name>
        <dbReference type="ChEBI" id="CHEBI:30413"/>
    </cofactor>
    <text evidence="2">Binds 1 heme group covalently.</text>
</comment>
<comment type="subunit">
    <text evidence="1">The 4 large subunits of the cytochrome b6-f complex are cytochrome b6, subunit IV (17 kDa polypeptide, petD), cytochrome f and the Rieske protein, while the 4 small subunits are PetG, PetL, PetM and PetN. The complex functions as a dimer (By similarity).</text>
</comment>
<comment type="subcellular location">
    <subcellularLocation>
        <location evidence="2">Plastid</location>
        <location evidence="2">Chloroplast thylakoid membrane</location>
        <topology evidence="2">Single-pass membrane protein</topology>
    </subcellularLocation>
</comment>
<comment type="similarity">
    <text evidence="2">Belongs to the cytochrome f family.</text>
</comment>
<reference key="1">
    <citation type="journal article" date="2006" name="Plant Cell Rep.">
        <title>Complete sequence and organization of the cucumber (Cucumis sativus L. cv. Baekmibaekdadagi) chloroplast genome.</title>
        <authorList>
            <person name="Kim J.-S."/>
            <person name="Jung J.D."/>
            <person name="Lee J.-A."/>
            <person name="Park H.-W."/>
            <person name="Oh K.-H."/>
            <person name="Jeong W.J."/>
            <person name="Choi D.-W."/>
            <person name="Liu J.R."/>
            <person name="Cho K.Y."/>
        </authorList>
    </citation>
    <scope>NUCLEOTIDE SEQUENCE [LARGE SCALE GENOMIC DNA]</scope>
    <source>
        <strain>cv. Baekmibaekdadagi</strain>
    </source>
</reference>
<reference key="2">
    <citation type="journal article" date="2007" name="Cell. Mol. Biol. Lett.">
        <title>The complete structure of the cucumber (Cucumis sativus L.) chloroplast genome: its composition and comparative analysis.</title>
        <authorList>
            <person name="Plader W.W."/>
            <person name="Yukawa Y."/>
            <person name="Sugiura M."/>
            <person name="Malepszy S."/>
        </authorList>
    </citation>
    <scope>NUCLEOTIDE SEQUENCE [LARGE SCALE GENOMIC DNA]</scope>
    <source>
        <strain>cv. Borszczagowski</strain>
    </source>
</reference>
<reference key="3">
    <citation type="journal article" date="2007" name="Genome">
        <title>Sequencing cucumber (Cucumis sativus L.) chloroplast genomes identifies differences between chilling-tolerant and -susceptible cucumber lines.</title>
        <authorList>
            <person name="Chung S.-M."/>
            <person name="Gordon V.S."/>
            <person name="Staub J.E."/>
        </authorList>
    </citation>
    <scope>NUCLEOTIDE SEQUENCE [LARGE SCALE GENOMIC DNA]</scope>
    <source>
        <strain>cv. Chipper</strain>
        <strain>cv. Gy14</strain>
    </source>
</reference>